<organism>
    <name type="scientific">Candida albicans</name>
    <name type="common">Yeast</name>
    <dbReference type="NCBI Taxonomy" id="5476"/>
    <lineage>
        <taxon>Eukaryota</taxon>
        <taxon>Fungi</taxon>
        <taxon>Dikarya</taxon>
        <taxon>Ascomycota</taxon>
        <taxon>Saccharomycotina</taxon>
        <taxon>Pichiomycetes</taxon>
        <taxon>Debaryomycetaceae</taxon>
        <taxon>Candida/Lodderomyces clade</taxon>
        <taxon>Candida</taxon>
    </lineage>
</organism>
<accession>Q874K0</accession>
<gene>
    <name evidence="7" type="primary">ERG27</name>
</gene>
<dbReference type="EC" id="1.1.1.270" evidence="6"/>
<dbReference type="EMBL" id="AY140908">
    <property type="protein sequence ID" value="AAN28009.1"/>
    <property type="molecule type" value="Genomic_DNA"/>
</dbReference>
<dbReference type="SMR" id="Q874K0"/>
<dbReference type="GlyCosmos" id="Q874K0">
    <property type="glycosylation" value="1 site, No reported glycans"/>
</dbReference>
<dbReference type="VEuPathDB" id="FungiDB:CAWG_01467"/>
<dbReference type="VEuPathDB" id="FungiDB:CR_01140C_A"/>
<dbReference type="UniPathway" id="UPA00770">
    <property type="reaction ID" value="UER00758"/>
</dbReference>
<dbReference type="GO" id="GO:0005789">
    <property type="term" value="C:endoplasmic reticulum membrane"/>
    <property type="evidence" value="ECO:0007669"/>
    <property type="project" value="UniProtKB-SubCell"/>
</dbReference>
<dbReference type="GO" id="GO:0005811">
    <property type="term" value="C:lipid droplet"/>
    <property type="evidence" value="ECO:0007669"/>
    <property type="project" value="UniProtKB-SubCell"/>
</dbReference>
<dbReference type="GO" id="GO:0005741">
    <property type="term" value="C:mitochondrial outer membrane"/>
    <property type="evidence" value="ECO:0007669"/>
    <property type="project" value="TreeGrafter"/>
</dbReference>
<dbReference type="GO" id="GO:0000253">
    <property type="term" value="F:3-beta-hydroxysteroid 3-dehydrogenase (NADP+) activity"/>
    <property type="evidence" value="ECO:0007669"/>
    <property type="project" value="UniProtKB-EC"/>
</dbReference>
<dbReference type="GO" id="GO:0006696">
    <property type="term" value="P:ergosterol biosynthetic process"/>
    <property type="evidence" value="ECO:0007669"/>
    <property type="project" value="EnsemblFungi"/>
</dbReference>
<dbReference type="CDD" id="cd08941">
    <property type="entry name" value="3KS_SDR_c"/>
    <property type="match status" value="1"/>
</dbReference>
<dbReference type="FunFam" id="3.40.50.720:FF:000525">
    <property type="entry name" value="3-keto-steroid reductase"/>
    <property type="match status" value="1"/>
</dbReference>
<dbReference type="Gene3D" id="3.40.50.720">
    <property type="entry name" value="NAD(P)-binding Rossmann-like Domain"/>
    <property type="match status" value="1"/>
</dbReference>
<dbReference type="InterPro" id="IPR051593">
    <property type="entry name" value="Ergosterol_Biosynth_ERG27"/>
</dbReference>
<dbReference type="InterPro" id="IPR042829">
    <property type="entry name" value="HSD17B7/Erg27"/>
</dbReference>
<dbReference type="InterPro" id="IPR036291">
    <property type="entry name" value="NAD(P)-bd_dom_sf"/>
</dbReference>
<dbReference type="InterPro" id="IPR002347">
    <property type="entry name" value="SDR_fam"/>
</dbReference>
<dbReference type="PANTHER" id="PTHR43647:SF1">
    <property type="entry name" value="3-KETO-STEROID REDUCTASE ERG27"/>
    <property type="match status" value="1"/>
</dbReference>
<dbReference type="PANTHER" id="PTHR43647">
    <property type="entry name" value="DEHYDROGENASE"/>
    <property type="match status" value="1"/>
</dbReference>
<dbReference type="Pfam" id="PF00106">
    <property type="entry name" value="adh_short"/>
    <property type="match status" value="1"/>
</dbReference>
<dbReference type="SUPFAM" id="SSF51735">
    <property type="entry name" value="NAD(P)-binding Rossmann-fold domains"/>
    <property type="match status" value="1"/>
</dbReference>
<feature type="chain" id="PRO_0000054590" description="3-keto-steroid reductase ERG27">
    <location>
        <begin position="1"/>
        <end position="346"/>
    </location>
</feature>
<feature type="transmembrane region" description="Helical" evidence="4">
    <location>
        <begin position="242"/>
        <end position="262"/>
    </location>
</feature>
<feature type="active site" description="Proton donor" evidence="2">
    <location>
        <position position="182"/>
    </location>
</feature>
<feature type="active site" description="Proton donor" evidence="2">
    <location>
        <position position="205"/>
    </location>
</feature>
<feature type="active site" description="Lowers pKa of active site Tyr" evidence="2">
    <location>
        <position position="209"/>
    </location>
</feature>
<feature type="binding site" evidence="1">
    <location>
        <position position="19"/>
    </location>
    <ligand>
        <name>NADP(+)</name>
        <dbReference type="ChEBI" id="CHEBI:58349"/>
    </ligand>
</feature>
<feature type="binding site" evidence="1">
    <location>
        <position position="42"/>
    </location>
    <ligand>
        <name>NADP(+)</name>
        <dbReference type="ChEBI" id="CHEBI:58349"/>
    </ligand>
</feature>
<feature type="binding site" evidence="1">
    <location>
        <position position="48"/>
    </location>
    <ligand>
        <name>NADP(+)</name>
        <dbReference type="ChEBI" id="CHEBI:58349"/>
    </ligand>
</feature>
<feature type="binding site" evidence="2">
    <location>
        <position position="205"/>
    </location>
    <ligand>
        <name>NADP(+)</name>
        <dbReference type="ChEBI" id="CHEBI:58349"/>
    </ligand>
</feature>
<feature type="binding site" evidence="2">
    <location>
        <position position="209"/>
    </location>
    <ligand>
        <name>NADP(+)</name>
        <dbReference type="ChEBI" id="CHEBI:58349"/>
    </ligand>
</feature>
<feature type="binding site" evidence="1">
    <location>
        <position position="241"/>
    </location>
    <ligand>
        <name>NADP(+)</name>
        <dbReference type="ChEBI" id="CHEBI:58349"/>
    </ligand>
</feature>
<feature type="glycosylation site" description="N-linked (GlcNAc...) asparagine" evidence="5">
    <location>
        <position position="272"/>
    </location>
</feature>
<proteinExistence type="evidence at protein level"/>
<protein>
    <recommendedName>
        <fullName evidence="7">3-keto-steroid reductase ERG27</fullName>
        <ecNumber evidence="6">1.1.1.270</ecNumber>
    </recommendedName>
</protein>
<sequence>MSLLKDSTVAVITGTSSNLGFNIAVRLLEGLPDNKEITLVVTSRTLPKVKEVISDIKKYIVEKIPTKVNKVEFDYLLVDFTDMVSILSAYYELNKRYKHIDYLFINAAQGVYGGIDWTGAVLEVLQSPIEAVTNPTYKLQKVGVESGDKLGLVFQANVFGPYYFIHRIKHLLKNGGKIVWISSLMSSPKYLSFNDLQLLRSPASYEGSKRLVDLMHFGTYNKLEREYGIKQYLVHPGIFTSFSFFQYLNVFTYYGMLFLFYLARFLGSPYHNISGYIAANAPVAAALGQTKQNCKTASACTRSGKEYLLEEEIDSTGSDDVVSYLDTLTKEWDEKLKDQIVNTRQP</sequence>
<evidence type="ECO:0000250" key="1">
    <source>
        <dbReference type="UniProtKB" id="L0E2Z4"/>
    </source>
</evidence>
<evidence type="ECO:0000250" key="2">
    <source>
        <dbReference type="UniProtKB" id="O93868"/>
    </source>
</evidence>
<evidence type="ECO:0000250" key="3">
    <source>
        <dbReference type="UniProtKB" id="Q12452"/>
    </source>
</evidence>
<evidence type="ECO:0000255" key="4"/>
<evidence type="ECO:0000255" key="5">
    <source>
        <dbReference type="PROSITE-ProRule" id="PRU00498"/>
    </source>
</evidence>
<evidence type="ECO:0000269" key="6">
    <source>
    </source>
</evidence>
<evidence type="ECO:0000303" key="7">
    <source>
    </source>
</evidence>
<evidence type="ECO:0000305" key="8"/>
<reference key="1">
    <citation type="journal article" date="2004" name="Med. Mycol.">
        <title>Isolation, characterization, and regulation of the Candida albicans ERG27 gene encoding the sterol 3-keto reductase.</title>
        <authorList>
            <person name="Pierson C.A."/>
            <person name="Jia N."/>
            <person name="Mo C."/>
            <person name="Lees N.D."/>
            <person name="Sturm A.M."/>
            <person name="Eckstein J."/>
            <person name="Barbuct R."/>
            <person name="Bard M."/>
        </authorList>
    </citation>
    <scope>NUCLEOTIDE SEQUENCE [GENOMIC DNA]</scope>
    <scope>FUNCTION</scope>
    <scope>CATALYTIC ACTIVITY</scope>
    <scope>DISRUPTION PHENOTYPE</scope>
    <scope>INDUCTION</scope>
    <scope>PATHWAY</scope>
</reference>
<name>ERG27_CANAX</name>
<comment type="function">
    <text evidence="6 8">3-keto-steroid reductase; part of the third module of ergosterol biosynthesis pathway that includes the late steps of the pathway (PubMed:15552648). ERG27 is a catalytic component of the C-4 demethylation complex that catalyzes the reduction of the keto group on the C-3 (PubMed:15552648). The third module or late pathway involves the ergosterol synthesis itself through consecutive reactions that mainly occur in the endoplasmic reticulum (ER) membrane. Firstly, the squalene synthase ERG9 catalyzes the condensation of 2 farnesyl pyrophosphate moieties to form squalene, which is the precursor of all steroids. Squalene synthase is crucial for balancing the incorporation of farnesyl diphosphate (FPP) into sterol and nonsterol isoprene synthesis. Secondly, the squalene epoxidase ERG1 catalyzes the stereospecific oxidation of squalene to (S)-2,3-epoxysqualene, which is considered to be a rate-limiting enzyme in steroid biosynthesis. Then, the lanosterol synthase ERG7 catalyzes the cyclization of (S)-2,3 oxidosqualene to lanosterol, a reaction that forms the sterol core. In the next steps, lanosterol is transformed to zymosterol through a complex process involving various demethylation, reduction and desaturation reactions. The lanosterol 14-alpha-demethylase ERG11 (also known as CYP51) catalyzes C14-demethylation of lanosterol to produce 4,4'-dimethyl cholesta-8,14,24-triene-3-beta-ol, which is critical for ergosterol biosynthesis. The C-14 reductase ERG24 reduces the C14=C15 double bond of 4,4-dimethyl-cholesta-8,14,24-trienol to produce 4,4-dimethyl-cholesta-8,24-dienol. 4,4-dimethyl-cholesta-8,24-dienol is substrate of the C-4 demethylation complex ERG25-ERG26-ERG27 in which ERG25 catalyzes the three-step monooxygenation required for the demethylation of 4,4-dimethyl and 4alpha-methylsterols, ERG26 catalyzes the oxidative decarboxylation that results in a reduction of the 3-beta-hydroxy group at the C-3 carbon to an oxo group, and ERG27 is responsible for the reduction of the keto group on the C-3. ERG28 has a role as a scaffold to help anchor ERG25, ERG26 and ERG27 to the endoplasmic reticulum and ERG29 regulates the activity of the iron-containing C4-methylsterol oxidase ERG25. Then, the sterol 24-C-methyltransferase ERG6 catalyzes the methyl transfer from S-adenosyl-methionine to the C-24 of zymosterol to form fecosterol. The C-8 sterol isomerase ERG2 catalyzes the reaction which results in unsaturation at C-7 in the B ring of sterols and thus converts fecosterol to episterol. The sterol-C5-desaturase ERG3 then catalyzes the introduction of a C-5 double bond in the B ring to produce 5-dehydroepisterol. The C-22 sterol desaturase ERG5 further converts 5-dehydroepisterol into ergosta-5,7,22,24(28)-tetraen-3beta-ol by forming the C-22(23) double bond in the sterol side chain. Finally, ergosta-5,7,22,24(28)-tetraen-3beta-ol is substrate of the C-24(28) sterol reductase ERG4 to produce ergosterol (Probable).</text>
</comment>
<comment type="function">
    <text evidence="3">Facilitates the association of ERG7 with lipid particles preventing its digestion in the endoplasmic reticulum and the lipid particles.</text>
</comment>
<comment type="catalytic activity">
    <reaction evidence="6">
        <text>3-dehydro-4alpha-methylzymosterol + NADPH + H(+) = 4alpha-methylzymosterol + NADP(+)</text>
        <dbReference type="Rhea" id="RHEA:36379"/>
        <dbReference type="ChEBI" id="CHEBI:1949"/>
        <dbReference type="ChEBI" id="CHEBI:15378"/>
        <dbReference type="ChEBI" id="CHEBI:57783"/>
        <dbReference type="ChEBI" id="CHEBI:58349"/>
        <dbReference type="ChEBI" id="CHEBI:136486"/>
        <dbReference type="EC" id="1.1.1.270"/>
    </reaction>
    <physiologicalReaction direction="left-to-right" evidence="6">
        <dbReference type="Rhea" id="RHEA:36380"/>
    </physiologicalReaction>
</comment>
<comment type="pathway">
    <text evidence="6">Steroid biosynthesis; zymosterol biosynthesis; zymosterol from lanosterol: step 5/6.</text>
</comment>
<comment type="subunit">
    <text evidence="3">Heterotetramer of ERG25, ERG26, ERG27 and ERG28 (By similarity). ERG28 acts as a scaffold to tether ERG27 and other 4,4-demethylation-related enzymes, forming a demethylation enzyme complex, in the endoplasmic reticulum. Interacts with ERG25 and ERG28. Also interacts with ERG7, but only in lipid particles (By similarity).</text>
</comment>
<comment type="subcellular location">
    <subcellularLocation>
        <location evidence="3">Endoplasmic reticulum membrane</location>
        <topology evidence="4">Single-pass membrane protein</topology>
    </subcellularLocation>
    <subcellularLocation>
        <location evidence="3">Lipid droplet</location>
    </subcellularLocation>
</comment>
<comment type="induction">
    <text evidence="6">Expression is increased by itraconazole (which targets the lanosterol demethylase CYP51/ERG11) and by zaragozic acid A (which targets the squalene synthase ERG9).</text>
</comment>
<comment type="disruption phenotype">
    <text evidence="6">Leads to complete loss of both 3-keto reductase and oxidosqualene cyclase (performed by ERG7) activities, compromising all sterol synthesis.</text>
</comment>
<comment type="similarity">
    <text evidence="8">Belongs to the short-chain dehydrogenases/reductases (SDR) family. ERG27 subfamily.</text>
</comment>
<keyword id="KW-0256">Endoplasmic reticulum</keyword>
<keyword id="KW-0325">Glycoprotein</keyword>
<keyword id="KW-0444">Lipid biosynthesis</keyword>
<keyword id="KW-0551">Lipid droplet</keyword>
<keyword id="KW-0443">Lipid metabolism</keyword>
<keyword id="KW-0472">Membrane</keyword>
<keyword id="KW-0521">NADP</keyword>
<keyword id="KW-0560">Oxidoreductase</keyword>
<keyword id="KW-0752">Steroid biosynthesis</keyword>
<keyword id="KW-0812">Transmembrane</keyword>
<keyword id="KW-1133">Transmembrane helix</keyword>